<evidence type="ECO:0000250" key="1"/>
<evidence type="ECO:0000256" key="2">
    <source>
        <dbReference type="SAM" id="MobiDB-lite"/>
    </source>
</evidence>
<evidence type="ECO:0000305" key="3"/>
<accession>P0CS41</accession>
<accession>Q55ZY2</accession>
<accession>Q5KP90</accession>
<protein>
    <recommendedName>
        <fullName>WD repeat-containing protein JIP5</fullName>
    </recommendedName>
</protein>
<proteinExistence type="inferred from homology"/>
<sequence length="374" mass="41505">MPDIKLKNQASLCASTRLFLAYTSIKPFDVAFHPKEPVVFSSLLTGQVCAWSYDDATGETSSSWSVRPSKRTARALSIEENGDEIWMGGKSGSLLCALTPPKVIQLSTRDGSMTRERDSAHECPINRVYCVNRNLVATGDDDGVIKLWDPRQADSIRTYSQHFDYISDFTYFDDKRQLVATSGDGHLSVIDIRSNKSTPLTVSEDQEDELLSIVPIKGGQKAIVGSGLGILSVWNRQMGWADSVDRIPGHPASIDAIVALTPDIIATGSEDGMIRVIQVLPHKFLGVVATHEEFPVERIRLDRNNKWLGSVSHDECLKLTDVEDLFEDSDEDDEMEEDEPDSDEEKSKKKKKDNGMKDMSRGQAENDGSFFADL</sequence>
<organism>
    <name type="scientific">Cryptococcus neoformans var. neoformans serotype D (strain B-3501A)</name>
    <name type="common">Filobasidiella neoformans</name>
    <dbReference type="NCBI Taxonomy" id="283643"/>
    <lineage>
        <taxon>Eukaryota</taxon>
        <taxon>Fungi</taxon>
        <taxon>Dikarya</taxon>
        <taxon>Basidiomycota</taxon>
        <taxon>Agaricomycotina</taxon>
        <taxon>Tremellomycetes</taxon>
        <taxon>Tremellales</taxon>
        <taxon>Cryptococcaceae</taxon>
        <taxon>Cryptococcus</taxon>
        <taxon>Cryptococcus neoformans species complex</taxon>
    </lineage>
</organism>
<name>JIP5_CRYNB</name>
<feature type="chain" id="PRO_0000410333" description="WD repeat-containing protein JIP5">
    <location>
        <begin position="1"/>
        <end position="374"/>
    </location>
</feature>
<feature type="repeat" description="WD 1">
    <location>
        <begin position="21"/>
        <end position="61"/>
    </location>
</feature>
<feature type="repeat" description="WD 2">
    <location>
        <begin position="68"/>
        <end position="107"/>
    </location>
</feature>
<feature type="repeat" description="WD 3">
    <location>
        <begin position="120"/>
        <end position="158"/>
    </location>
</feature>
<feature type="repeat" description="WD 4">
    <location>
        <begin position="161"/>
        <end position="200"/>
    </location>
</feature>
<feature type="repeat" description="WD 5">
    <location>
        <begin position="205"/>
        <end position="244"/>
    </location>
</feature>
<feature type="repeat" description="WD 6">
    <location>
        <begin position="249"/>
        <end position="287"/>
    </location>
</feature>
<feature type="repeat" description="WD 7">
    <location>
        <begin position="290"/>
        <end position="330"/>
    </location>
</feature>
<feature type="region of interest" description="Disordered" evidence="2">
    <location>
        <begin position="325"/>
        <end position="374"/>
    </location>
</feature>
<feature type="compositionally biased region" description="Acidic residues" evidence="2">
    <location>
        <begin position="325"/>
        <end position="344"/>
    </location>
</feature>
<dbReference type="EMBL" id="AAEY01000002">
    <property type="protein sequence ID" value="EAL23242.1"/>
    <property type="molecule type" value="Genomic_DNA"/>
</dbReference>
<dbReference type="RefSeq" id="XP_777889.1">
    <property type="nucleotide sequence ID" value="XM_772796.1"/>
</dbReference>
<dbReference type="SMR" id="P0CS41"/>
<dbReference type="GeneID" id="4933616"/>
<dbReference type="KEGG" id="cnb:CNBA3580"/>
<dbReference type="HOGENOM" id="CLU_035848_2_1_1"/>
<dbReference type="OrthoDB" id="6002at5206"/>
<dbReference type="GO" id="GO:0005730">
    <property type="term" value="C:nucleolus"/>
    <property type="evidence" value="ECO:0007669"/>
    <property type="project" value="UniProtKB-SubCell"/>
</dbReference>
<dbReference type="FunFam" id="2.130.10.10:FF:001600">
    <property type="entry name" value="WD repeat-containing protein JIP5"/>
    <property type="match status" value="1"/>
</dbReference>
<dbReference type="Gene3D" id="2.130.10.10">
    <property type="entry name" value="YVTN repeat-like/Quinoprotein amine dehydrogenase"/>
    <property type="match status" value="1"/>
</dbReference>
<dbReference type="InterPro" id="IPR015943">
    <property type="entry name" value="WD40/YVTN_repeat-like_dom_sf"/>
</dbReference>
<dbReference type="InterPro" id="IPR036322">
    <property type="entry name" value="WD40_repeat_dom_sf"/>
</dbReference>
<dbReference type="InterPro" id="IPR001680">
    <property type="entry name" value="WD40_rpt"/>
</dbReference>
<dbReference type="InterPro" id="IPR017422">
    <property type="entry name" value="WDR55"/>
</dbReference>
<dbReference type="InterPro" id="IPR050505">
    <property type="entry name" value="WDR55_POC1"/>
</dbReference>
<dbReference type="PANTHER" id="PTHR44019">
    <property type="entry name" value="WD REPEAT-CONTAINING PROTEIN 55"/>
    <property type="match status" value="1"/>
</dbReference>
<dbReference type="PANTHER" id="PTHR44019:SF20">
    <property type="entry name" value="WD REPEAT-CONTAINING PROTEIN 55"/>
    <property type="match status" value="1"/>
</dbReference>
<dbReference type="Pfam" id="PF24796">
    <property type="entry name" value="WDR55"/>
    <property type="match status" value="1"/>
</dbReference>
<dbReference type="PIRSF" id="PIRSF038169">
    <property type="entry name" value="WD_repeat_p55"/>
    <property type="match status" value="1"/>
</dbReference>
<dbReference type="SMART" id="SM00320">
    <property type="entry name" value="WD40"/>
    <property type="match status" value="6"/>
</dbReference>
<dbReference type="SUPFAM" id="SSF50978">
    <property type="entry name" value="WD40 repeat-like"/>
    <property type="match status" value="1"/>
</dbReference>
<dbReference type="PROSITE" id="PS50082">
    <property type="entry name" value="WD_REPEATS_2"/>
    <property type="match status" value="1"/>
</dbReference>
<dbReference type="PROSITE" id="PS50294">
    <property type="entry name" value="WD_REPEATS_REGION"/>
    <property type="match status" value="1"/>
</dbReference>
<comment type="subcellular location">
    <subcellularLocation>
        <location evidence="1">Nucleus</location>
        <location evidence="1">Nucleolus</location>
    </subcellularLocation>
</comment>
<comment type="similarity">
    <text evidence="3">Belongs to the WD repeat WDR55 family.</text>
</comment>
<gene>
    <name type="primary">JIP5</name>
    <name type="ordered locus">CNBA3580</name>
</gene>
<keyword id="KW-0539">Nucleus</keyword>
<keyword id="KW-0677">Repeat</keyword>
<keyword id="KW-0853">WD repeat</keyword>
<reference key="1">
    <citation type="journal article" date="2005" name="Science">
        <title>The genome of the basidiomycetous yeast and human pathogen Cryptococcus neoformans.</title>
        <authorList>
            <person name="Loftus B.J."/>
            <person name="Fung E."/>
            <person name="Roncaglia P."/>
            <person name="Rowley D."/>
            <person name="Amedeo P."/>
            <person name="Bruno D."/>
            <person name="Vamathevan J."/>
            <person name="Miranda M."/>
            <person name="Anderson I.J."/>
            <person name="Fraser J.A."/>
            <person name="Allen J.E."/>
            <person name="Bosdet I.E."/>
            <person name="Brent M.R."/>
            <person name="Chiu R."/>
            <person name="Doering T.L."/>
            <person name="Donlin M.J."/>
            <person name="D'Souza C.A."/>
            <person name="Fox D.S."/>
            <person name="Grinberg V."/>
            <person name="Fu J."/>
            <person name="Fukushima M."/>
            <person name="Haas B.J."/>
            <person name="Huang J.C."/>
            <person name="Janbon G."/>
            <person name="Jones S.J.M."/>
            <person name="Koo H.L."/>
            <person name="Krzywinski M.I."/>
            <person name="Kwon-Chung K.J."/>
            <person name="Lengeler K.B."/>
            <person name="Maiti R."/>
            <person name="Marra M.A."/>
            <person name="Marra R.E."/>
            <person name="Mathewson C.A."/>
            <person name="Mitchell T.G."/>
            <person name="Pertea M."/>
            <person name="Riggs F.R."/>
            <person name="Salzberg S.L."/>
            <person name="Schein J.E."/>
            <person name="Shvartsbeyn A."/>
            <person name="Shin H."/>
            <person name="Shumway M."/>
            <person name="Specht C.A."/>
            <person name="Suh B.B."/>
            <person name="Tenney A."/>
            <person name="Utterback T.R."/>
            <person name="Wickes B.L."/>
            <person name="Wortman J.R."/>
            <person name="Wye N.H."/>
            <person name="Kronstad J.W."/>
            <person name="Lodge J.K."/>
            <person name="Heitman J."/>
            <person name="Davis R.W."/>
            <person name="Fraser C.M."/>
            <person name="Hyman R.W."/>
        </authorList>
    </citation>
    <scope>NUCLEOTIDE SEQUENCE [LARGE SCALE GENOMIC DNA]</scope>
    <source>
        <strain>B-3501A</strain>
    </source>
</reference>